<feature type="chain" id="PRO_0000371845" description="NADH-quinone oxidoreductase subunit D">
    <location>
        <begin position="1"/>
        <end position="408"/>
    </location>
</feature>
<sequence>MQDPNKLRPFFENVEFNREGSNMILNFGPQHPSAHGQLKLVLEVDGEKIIKARPGIGYMHRGVEKMAENMIYQEFVPVTDRVDYIAAGSNNYGFCATVEKLCGIDVPRRAQIIRTMLLELNRIASHLLFLGTHALDIGAMTVFLYTFREREYVLDLIEKYSGARLTHHNVKIGGMFVDLPDGWLDELLAFCEKFPRDIADYEALLDTNRIWLLRTQNVGVITKEQALSCGCSGVMLRASGYKWDIRKEEPYLIYDELDFDVPYAEAGDCYARYKCYVQEMRESVKILTQCVPLYKASEPKILADSPEFVSAGKEQLMSQNYSLMQHFVLITQGLKPPEGEIYLATESPKGELGFYIYSVGESSPYRLKIRCPSFWHCAIYEEIMPGQYIADVTAIIGSSNIILGEVDR</sequence>
<evidence type="ECO:0000255" key="1">
    <source>
        <dbReference type="HAMAP-Rule" id="MF_01358"/>
    </source>
</evidence>
<gene>
    <name evidence="1" type="primary">nuoD</name>
    <name type="ordered locus">CHAB381_0184</name>
</gene>
<proteinExistence type="inferred from homology"/>
<comment type="function">
    <text evidence="1">NDH-1 shuttles electrons from NADH, via FMN and iron-sulfur (Fe-S) centers, to quinones in the respiratory chain. The immediate electron acceptor for the enzyme in this species is believed to be ubiquinone. Couples the redox reaction to proton translocation (for every two electrons transferred, four hydrogen ions are translocated across the cytoplasmic membrane), and thus conserves the redox energy in a proton gradient.</text>
</comment>
<comment type="catalytic activity">
    <reaction evidence="1">
        <text>a quinone + NADH + 5 H(+)(in) = a quinol + NAD(+) + 4 H(+)(out)</text>
        <dbReference type="Rhea" id="RHEA:57888"/>
        <dbReference type="ChEBI" id="CHEBI:15378"/>
        <dbReference type="ChEBI" id="CHEBI:24646"/>
        <dbReference type="ChEBI" id="CHEBI:57540"/>
        <dbReference type="ChEBI" id="CHEBI:57945"/>
        <dbReference type="ChEBI" id="CHEBI:132124"/>
    </reaction>
</comment>
<comment type="subunit">
    <text evidence="1">NDH-1 is composed of 14 different subunits. Subunits NuoB, C, D, E, F, and G constitute the peripheral sector of the complex.</text>
</comment>
<comment type="subcellular location">
    <subcellularLocation>
        <location evidence="1">Cell inner membrane</location>
        <topology evidence="1">Peripheral membrane protein</topology>
        <orientation evidence="1">Cytoplasmic side</orientation>
    </subcellularLocation>
</comment>
<comment type="similarity">
    <text evidence="1">Belongs to the complex I 49 kDa subunit family.</text>
</comment>
<dbReference type="EC" id="7.1.1.-" evidence="1"/>
<dbReference type="EMBL" id="CP000776">
    <property type="protein sequence ID" value="ABS52082.1"/>
    <property type="molecule type" value="Genomic_DNA"/>
</dbReference>
<dbReference type="RefSeq" id="WP_012108073.1">
    <property type="nucleotide sequence ID" value="NC_009714.1"/>
</dbReference>
<dbReference type="SMR" id="A7HZV1"/>
<dbReference type="STRING" id="360107.CHAB381_0184"/>
<dbReference type="KEGG" id="cha:CHAB381_0184"/>
<dbReference type="eggNOG" id="COG0649">
    <property type="taxonomic scope" value="Bacteria"/>
</dbReference>
<dbReference type="HOGENOM" id="CLU_015134_1_2_7"/>
<dbReference type="Proteomes" id="UP000002407">
    <property type="component" value="Chromosome"/>
</dbReference>
<dbReference type="GO" id="GO:0005886">
    <property type="term" value="C:plasma membrane"/>
    <property type="evidence" value="ECO:0007669"/>
    <property type="project" value="UniProtKB-SubCell"/>
</dbReference>
<dbReference type="GO" id="GO:0051287">
    <property type="term" value="F:NAD binding"/>
    <property type="evidence" value="ECO:0007669"/>
    <property type="project" value="InterPro"/>
</dbReference>
<dbReference type="GO" id="GO:0050136">
    <property type="term" value="F:NADH:ubiquinone reductase (non-electrogenic) activity"/>
    <property type="evidence" value="ECO:0007669"/>
    <property type="project" value="UniProtKB-UniRule"/>
</dbReference>
<dbReference type="GO" id="GO:0048038">
    <property type="term" value="F:quinone binding"/>
    <property type="evidence" value="ECO:0007669"/>
    <property type="project" value="UniProtKB-KW"/>
</dbReference>
<dbReference type="Gene3D" id="1.10.645.10">
    <property type="entry name" value="Cytochrome-c3 Hydrogenase, chain B"/>
    <property type="match status" value="1"/>
</dbReference>
<dbReference type="HAMAP" id="MF_01358">
    <property type="entry name" value="NDH1_NuoD"/>
    <property type="match status" value="1"/>
</dbReference>
<dbReference type="InterPro" id="IPR001135">
    <property type="entry name" value="NADH_Q_OxRdtase_suD"/>
</dbReference>
<dbReference type="InterPro" id="IPR022885">
    <property type="entry name" value="NDH1_su_D/H"/>
</dbReference>
<dbReference type="InterPro" id="IPR029014">
    <property type="entry name" value="NiFe-Hase_large"/>
</dbReference>
<dbReference type="NCBIfam" id="TIGR01962">
    <property type="entry name" value="NuoD"/>
    <property type="match status" value="1"/>
</dbReference>
<dbReference type="NCBIfam" id="NF004739">
    <property type="entry name" value="PRK06075.1"/>
    <property type="match status" value="1"/>
</dbReference>
<dbReference type="PANTHER" id="PTHR11993:SF10">
    <property type="entry name" value="NADH DEHYDROGENASE [UBIQUINONE] IRON-SULFUR PROTEIN 2, MITOCHONDRIAL"/>
    <property type="match status" value="1"/>
</dbReference>
<dbReference type="PANTHER" id="PTHR11993">
    <property type="entry name" value="NADH-UBIQUINONE OXIDOREDUCTASE 49 KDA SUBUNIT"/>
    <property type="match status" value="1"/>
</dbReference>
<dbReference type="Pfam" id="PF00346">
    <property type="entry name" value="Complex1_49kDa"/>
    <property type="match status" value="1"/>
</dbReference>
<dbReference type="SUPFAM" id="SSF56762">
    <property type="entry name" value="HydB/Nqo4-like"/>
    <property type="match status" value="1"/>
</dbReference>
<protein>
    <recommendedName>
        <fullName evidence="1">NADH-quinone oxidoreductase subunit D</fullName>
        <ecNumber evidence="1">7.1.1.-</ecNumber>
    </recommendedName>
    <alternativeName>
        <fullName evidence="1">NADH dehydrogenase I subunit D</fullName>
    </alternativeName>
    <alternativeName>
        <fullName evidence="1">NDH-1 subunit D</fullName>
    </alternativeName>
</protein>
<organism>
    <name type="scientific">Campylobacter hominis (strain ATCC BAA-381 / DSM 21671 / CCUG 45161 / LMG 19568 / NCTC 13146 / CH001A)</name>
    <dbReference type="NCBI Taxonomy" id="360107"/>
    <lineage>
        <taxon>Bacteria</taxon>
        <taxon>Pseudomonadati</taxon>
        <taxon>Campylobacterota</taxon>
        <taxon>Epsilonproteobacteria</taxon>
        <taxon>Campylobacterales</taxon>
        <taxon>Campylobacteraceae</taxon>
        <taxon>Campylobacter</taxon>
    </lineage>
</organism>
<accession>A7HZV1</accession>
<keyword id="KW-0997">Cell inner membrane</keyword>
<keyword id="KW-1003">Cell membrane</keyword>
<keyword id="KW-0472">Membrane</keyword>
<keyword id="KW-0520">NAD</keyword>
<keyword id="KW-0874">Quinone</keyword>
<keyword id="KW-1185">Reference proteome</keyword>
<keyword id="KW-1278">Translocase</keyword>
<keyword id="KW-0813">Transport</keyword>
<keyword id="KW-0830">Ubiquinone</keyword>
<name>NUOD_CAMHC</name>
<reference key="1">
    <citation type="submission" date="2007-07" db="EMBL/GenBank/DDBJ databases">
        <title>Complete genome sequence of Campylobacter hominis ATCC BAA-381, a commensal isolated from the human gastrointestinal tract.</title>
        <authorList>
            <person name="Fouts D.E."/>
            <person name="Mongodin E.F."/>
            <person name="Puiu D."/>
            <person name="Sebastian Y."/>
            <person name="Miller W.G."/>
            <person name="Mandrell R.E."/>
            <person name="Nelson K.E."/>
        </authorList>
    </citation>
    <scope>NUCLEOTIDE SEQUENCE [LARGE SCALE GENOMIC DNA]</scope>
    <source>
        <strain>ATCC BAA-381 / DSM 21671 / CCUG 45161 / LMG 19568 / NCTC 13146 / CH001A</strain>
    </source>
</reference>